<feature type="chain" id="PRO_1000127982" description="Small ribosomal subunit protein uS19">
    <location>
        <begin position="1"/>
        <end position="92"/>
    </location>
</feature>
<organism>
    <name type="scientific">Francisella tularensis subsp. mediasiatica (strain FSC147)</name>
    <dbReference type="NCBI Taxonomy" id="441952"/>
    <lineage>
        <taxon>Bacteria</taxon>
        <taxon>Pseudomonadati</taxon>
        <taxon>Pseudomonadota</taxon>
        <taxon>Gammaproteobacteria</taxon>
        <taxon>Thiotrichales</taxon>
        <taxon>Francisellaceae</taxon>
        <taxon>Francisella</taxon>
    </lineage>
</organism>
<evidence type="ECO:0000255" key="1">
    <source>
        <dbReference type="HAMAP-Rule" id="MF_00531"/>
    </source>
</evidence>
<evidence type="ECO:0000305" key="2"/>
<keyword id="KW-0687">Ribonucleoprotein</keyword>
<keyword id="KW-0689">Ribosomal protein</keyword>
<keyword id="KW-0694">RNA-binding</keyword>
<keyword id="KW-0699">rRNA-binding</keyword>
<name>RS19_FRATM</name>
<accession>B2SDY1</accession>
<sequence length="92" mass="10499">MPRSLKKGPFVDHHLLKKVFEAQESNSKKPIKTWSRRSMIVPDMIGLTIAVHNGQQHVPVLMTEEMVGHKLGEFVVTRNYRGHAADKKAKKK</sequence>
<reference key="1">
    <citation type="journal article" date="2009" name="PLoS Pathog.">
        <title>Molecular evolutionary consequences of niche restriction in Francisella tularensis, a facultative intracellular pathogen.</title>
        <authorList>
            <person name="Larsson P."/>
            <person name="Elfsmark D."/>
            <person name="Svensson K."/>
            <person name="Wikstroem P."/>
            <person name="Forsman M."/>
            <person name="Brettin T."/>
            <person name="Keim P."/>
            <person name="Johansson A."/>
        </authorList>
    </citation>
    <scope>NUCLEOTIDE SEQUENCE [LARGE SCALE GENOMIC DNA]</scope>
    <source>
        <strain>FSC147</strain>
    </source>
</reference>
<dbReference type="EMBL" id="CP000915">
    <property type="protein sequence ID" value="ACD31345.1"/>
    <property type="molecule type" value="Genomic_DNA"/>
</dbReference>
<dbReference type="SMR" id="B2SDY1"/>
<dbReference type="KEGG" id="ftm:FTM_1523"/>
<dbReference type="HOGENOM" id="CLU_144911_0_1_6"/>
<dbReference type="GO" id="GO:0005737">
    <property type="term" value="C:cytoplasm"/>
    <property type="evidence" value="ECO:0007669"/>
    <property type="project" value="UniProtKB-ARBA"/>
</dbReference>
<dbReference type="GO" id="GO:0015935">
    <property type="term" value="C:small ribosomal subunit"/>
    <property type="evidence" value="ECO:0007669"/>
    <property type="project" value="InterPro"/>
</dbReference>
<dbReference type="GO" id="GO:0019843">
    <property type="term" value="F:rRNA binding"/>
    <property type="evidence" value="ECO:0007669"/>
    <property type="project" value="UniProtKB-UniRule"/>
</dbReference>
<dbReference type="GO" id="GO:0003735">
    <property type="term" value="F:structural constituent of ribosome"/>
    <property type="evidence" value="ECO:0007669"/>
    <property type="project" value="InterPro"/>
</dbReference>
<dbReference type="GO" id="GO:0000028">
    <property type="term" value="P:ribosomal small subunit assembly"/>
    <property type="evidence" value="ECO:0007669"/>
    <property type="project" value="TreeGrafter"/>
</dbReference>
<dbReference type="GO" id="GO:0006412">
    <property type="term" value="P:translation"/>
    <property type="evidence" value="ECO:0007669"/>
    <property type="project" value="UniProtKB-UniRule"/>
</dbReference>
<dbReference type="FunFam" id="3.30.860.10:FF:000001">
    <property type="entry name" value="30S ribosomal protein S19"/>
    <property type="match status" value="1"/>
</dbReference>
<dbReference type="Gene3D" id="3.30.860.10">
    <property type="entry name" value="30s Ribosomal Protein S19, Chain A"/>
    <property type="match status" value="1"/>
</dbReference>
<dbReference type="HAMAP" id="MF_00531">
    <property type="entry name" value="Ribosomal_uS19"/>
    <property type="match status" value="1"/>
</dbReference>
<dbReference type="InterPro" id="IPR002222">
    <property type="entry name" value="Ribosomal_uS19"/>
</dbReference>
<dbReference type="InterPro" id="IPR005732">
    <property type="entry name" value="Ribosomal_uS19_bac-type"/>
</dbReference>
<dbReference type="InterPro" id="IPR020934">
    <property type="entry name" value="Ribosomal_uS19_CS"/>
</dbReference>
<dbReference type="InterPro" id="IPR023575">
    <property type="entry name" value="Ribosomal_uS19_SF"/>
</dbReference>
<dbReference type="NCBIfam" id="TIGR01050">
    <property type="entry name" value="rpsS_bact"/>
    <property type="match status" value="1"/>
</dbReference>
<dbReference type="PANTHER" id="PTHR11880">
    <property type="entry name" value="RIBOSOMAL PROTEIN S19P FAMILY MEMBER"/>
    <property type="match status" value="1"/>
</dbReference>
<dbReference type="PANTHER" id="PTHR11880:SF8">
    <property type="entry name" value="SMALL RIBOSOMAL SUBUNIT PROTEIN US19M"/>
    <property type="match status" value="1"/>
</dbReference>
<dbReference type="Pfam" id="PF00203">
    <property type="entry name" value="Ribosomal_S19"/>
    <property type="match status" value="1"/>
</dbReference>
<dbReference type="PIRSF" id="PIRSF002144">
    <property type="entry name" value="Ribosomal_S19"/>
    <property type="match status" value="1"/>
</dbReference>
<dbReference type="PRINTS" id="PR00975">
    <property type="entry name" value="RIBOSOMALS19"/>
</dbReference>
<dbReference type="SUPFAM" id="SSF54570">
    <property type="entry name" value="Ribosomal protein S19"/>
    <property type="match status" value="1"/>
</dbReference>
<dbReference type="PROSITE" id="PS00323">
    <property type="entry name" value="RIBOSOMAL_S19"/>
    <property type="match status" value="1"/>
</dbReference>
<gene>
    <name evidence="1" type="primary">rpsS</name>
    <name type="ordered locus">FTM_1523</name>
</gene>
<protein>
    <recommendedName>
        <fullName evidence="1">Small ribosomal subunit protein uS19</fullName>
    </recommendedName>
    <alternativeName>
        <fullName evidence="2">30S ribosomal protein S19</fullName>
    </alternativeName>
</protein>
<comment type="function">
    <text evidence="1">Protein S19 forms a complex with S13 that binds strongly to the 16S ribosomal RNA.</text>
</comment>
<comment type="similarity">
    <text evidence="1">Belongs to the universal ribosomal protein uS19 family.</text>
</comment>
<proteinExistence type="inferred from homology"/>